<reference key="1">
    <citation type="submission" date="2004-11" db="EMBL/GenBank/DDBJ databases">
        <authorList>
            <consortium name="The German cDNA consortium"/>
        </authorList>
    </citation>
    <scope>NUCLEOTIDE SEQUENCE [LARGE SCALE MRNA]</scope>
    <source>
        <tissue>Brain cortex</tissue>
    </source>
</reference>
<proteinExistence type="evidence at transcript level"/>
<evidence type="ECO:0000250" key="1"/>
<evidence type="ECO:0000250" key="2">
    <source>
        <dbReference type="UniProtKB" id="Q5PQL7"/>
    </source>
</evidence>
<evidence type="ECO:0000255" key="3"/>
<evidence type="ECO:0000255" key="4">
    <source>
        <dbReference type="PROSITE-ProRule" id="PRU00255"/>
    </source>
</evidence>
<evidence type="ECO:0000305" key="5"/>
<organism>
    <name type="scientific">Pongo abelii</name>
    <name type="common">Sumatran orangutan</name>
    <name type="synonym">Pongo pygmaeus abelii</name>
    <dbReference type="NCBI Taxonomy" id="9601"/>
    <lineage>
        <taxon>Eukaryota</taxon>
        <taxon>Metazoa</taxon>
        <taxon>Chordata</taxon>
        <taxon>Craniata</taxon>
        <taxon>Vertebrata</taxon>
        <taxon>Euteleostomi</taxon>
        <taxon>Mammalia</taxon>
        <taxon>Eutheria</taxon>
        <taxon>Euarchontoglires</taxon>
        <taxon>Primates</taxon>
        <taxon>Haplorrhini</taxon>
        <taxon>Catarrhini</taxon>
        <taxon>Hominidae</taxon>
        <taxon>Pongo</taxon>
    </lineage>
</organism>
<accession>Q5NVC3</accession>
<keyword id="KW-1003">Cell membrane</keyword>
<keyword id="KW-0165">Cleavage on pair of basic residues</keyword>
<keyword id="KW-1015">Disulfide bond</keyword>
<keyword id="KW-0325">Glycoprotein</keyword>
<keyword id="KW-0458">Lysosome</keyword>
<keyword id="KW-0472">Membrane</keyword>
<keyword id="KW-0597">Phosphoprotein</keyword>
<keyword id="KW-1185">Reference proteome</keyword>
<keyword id="KW-0735">Signal-anchor</keyword>
<keyword id="KW-0812">Transmembrane</keyword>
<keyword id="KW-1133">Transmembrane helix</keyword>
<protein>
    <recommendedName>
        <fullName>Integral membrane protein 2C</fullName>
    </recommendedName>
    <component>
        <recommendedName>
            <fullName>CT-BRI3</fullName>
        </recommendedName>
    </component>
</protein>
<feature type="chain" id="PRO_0000154828" description="Integral membrane protein 2C">
    <location>
        <begin position="1"/>
        <end position="267"/>
    </location>
</feature>
<feature type="peptide" id="PRO_0000232647" description="CT-BRI3">
    <location>
        <begin position="243"/>
        <end position="267"/>
    </location>
</feature>
<feature type="transmembrane region" description="Helical; Signal-anchor for type II membrane protein" evidence="3">
    <location>
        <begin position="55"/>
        <end position="75"/>
    </location>
</feature>
<feature type="domain" description="BRICHOS" evidence="4">
    <location>
        <begin position="136"/>
        <end position="230"/>
    </location>
</feature>
<feature type="site" description="Cleavage; by furin" evidence="1">
    <location>
        <begin position="242"/>
        <end position="243"/>
    </location>
</feature>
<feature type="modified residue" description="Phosphothreonine" evidence="2">
    <location>
        <position position="37"/>
    </location>
</feature>
<feature type="glycosylation site" description="N-linked (GlcNAc...) asparagine" evidence="3">
    <location>
        <position position="169"/>
    </location>
</feature>
<feature type="disulfide bond" evidence="1">
    <location>
        <begin position="163"/>
        <end position="222"/>
    </location>
</feature>
<comment type="function">
    <text evidence="1">Negative regulator of amyloid-beta peptide production. May inhibit the processing of APP by blocking its access to alpha- and beta-secretase. Binding to the beta-secretase-cleaved APP C-terminal fragment is negligible, suggesting that ITM2C is a poor gamma-secretase cleavage inhibitor. May play a role in TNF-induced cell death and neuronal differentiation (By similarity).</text>
</comment>
<comment type="subunit">
    <text evidence="1">Interacts with BACE1. Interacts with APP. Interacts with STMN2 (By similarity).</text>
</comment>
<comment type="subcellular location">
    <subcellularLocation>
        <location evidence="1">Lysosome membrane</location>
        <topology evidence="1">Single-pass type II membrane protein</topology>
    </subcellularLocation>
    <subcellularLocation>
        <location evidence="1">Cell membrane</location>
        <topology evidence="1">Single-pass type II membrane protein</topology>
    </subcellularLocation>
</comment>
<comment type="PTM">
    <text evidence="1">Type I membrane-bound, as well as soluble, furin has a pre-eminent role in ITM2C proteolytic processing. PCSK7 and PCSK5 may also be involved although to a lesser extent. The soluble form of PCSK7 is incapable of processing ITM2C. Fails to undergo shedding by ADAM10 and intramembrane cleavage by SPPL2B (By similarity).</text>
</comment>
<comment type="similarity">
    <text evidence="5">Belongs to the ITM2 family.</text>
</comment>
<dbReference type="EMBL" id="CR926115">
    <property type="protein sequence ID" value="CAI29740.1"/>
    <property type="molecule type" value="mRNA"/>
</dbReference>
<dbReference type="EMBL" id="CR926009">
    <property type="protein sequence ID" value="CAI29647.1"/>
    <property type="molecule type" value="mRNA"/>
</dbReference>
<dbReference type="RefSeq" id="NP_001127092.1">
    <property type="nucleotide sequence ID" value="NM_001133620.1"/>
</dbReference>
<dbReference type="SMR" id="Q5NVC3"/>
<dbReference type="FunCoup" id="Q5NVC3">
    <property type="interactions" value="1133"/>
</dbReference>
<dbReference type="GlyCosmos" id="Q5NVC3">
    <property type="glycosylation" value="1 site, No reported glycans"/>
</dbReference>
<dbReference type="Ensembl" id="ENSPPYT00000015418.2">
    <property type="protein sequence ID" value="ENSPPYP00000014821.2"/>
    <property type="gene ID" value="ENSPPYG00000013257.3"/>
</dbReference>
<dbReference type="GeneID" id="100174123"/>
<dbReference type="KEGG" id="pon:100174123"/>
<dbReference type="CTD" id="81618"/>
<dbReference type="eggNOG" id="KOG4681">
    <property type="taxonomic scope" value="Eukaryota"/>
</dbReference>
<dbReference type="GeneTree" id="ENSGT00950000183115"/>
<dbReference type="InParanoid" id="Q5NVC3"/>
<dbReference type="OMA" id="AGNCNHI"/>
<dbReference type="OrthoDB" id="9982095at2759"/>
<dbReference type="Proteomes" id="UP000001595">
    <property type="component" value="Chromosome 2B"/>
</dbReference>
<dbReference type="GO" id="GO:0070062">
    <property type="term" value="C:extracellular exosome"/>
    <property type="evidence" value="ECO:0007669"/>
    <property type="project" value="TreeGrafter"/>
</dbReference>
<dbReference type="GO" id="GO:0005794">
    <property type="term" value="C:Golgi apparatus"/>
    <property type="evidence" value="ECO:0007669"/>
    <property type="project" value="Ensembl"/>
</dbReference>
<dbReference type="GO" id="GO:0005765">
    <property type="term" value="C:lysosomal membrane"/>
    <property type="evidence" value="ECO:0007669"/>
    <property type="project" value="UniProtKB-SubCell"/>
</dbReference>
<dbReference type="GO" id="GO:0005764">
    <property type="term" value="C:lysosome"/>
    <property type="evidence" value="ECO:0000250"/>
    <property type="project" value="UniProtKB"/>
</dbReference>
<dbReference type="GO" id="GO:0048471">
    <property type="term" value="C:perinuclear region of cytoplasm"/>
    <property type="evidence" value="ECO:0007669"/>
    <property type="project" value="Ensembl"/>
</dbReference>
<dbReference type="GO" id="GO:0005886">
    <property type="term" value="C:plasma membrane"/>
    <property type="evidence" value="ECO:0000250"/>
    <property type="project" value="UniProtKB"/>
</dbReference>
<dbReference type="GO" id="GO:0001540">
    <property type="term" value="F:amyloid-beta binding"/>
    <property type="evidence" value="ECO:0007669"/>
    <property type="project" value="Ensembl"/>
</dbReference>
<dbReference type="GO" id="GO:0005524">
    <property type="term" value="F:ATP binding"/>
    <property type="evidence" value="ECO:0007669"/>
    <property type="project" value="Ensembl"/>
</dbReference>
<dbReference type="GO" id="GO:0042985">
    <property type="term" value="P:negative regulation of amyloid precursor protein biosynthetic process"/>
    <property type="evidence" value="ECO:0007669"/>
    <property type="project" value="TreeGrafter"/>
</dbReference>
<dbReference type="GO" id="GO:0010977">
    <property type="term" value="P:negative regulation of neuron projection development"/>
    <property type="evidence" value="ECO:0007669"/>
    <property type="project" value="Ensembl"/>
</dbReference>
<dbReference type="GO" id="GO:0030182">
    <property type="term" value="P:neuron differentiation"/>
    <property type="evidence" value="ECO:0000250"/>
    <property type="project" value="UniProtKB"/>
</dbReference>
<dbReference type="GO" id="GO:2001238">
    <property type="term" value="P:positive regulation of extrinsic apoptotic signaling pathway"/>
    <property type="evidence" value="ECO:0007669"/>
    <property type="project" value="Ensembl"/>
</dbReference>
<dbReference type="Gene3D" id="3.30.390.150">
    <property type="match status" value="1"/>
</dbReference>
<dbReference type="InterPro" id="IPR007084">
    <property type="entry name" value="BRICHOS_dom"/>
</dbReference>
<dbReference type="InterPro" id="IPR040145">
    <property type="entry name" value="ITM2"/>
</dbReference>
<dbReference type="PANTHER" id="PTHR10962:SF5">
    <property type="entry name" value="INTEGRAL MEMBRANE PROTEIN 2C"/>
    <property type="match status" value="1"/>
</dbReference>
<dbReference type="PANTHER" id="PTHR10962">
    <property type="entry name" value="INTEGRAL TRANSMEMBRANE PROTEIN 2"/>
    <property type="match status" value="1"/>
</dbReference>
<dbReference type="Pfam" id="PF04089">
    <property type="entry name" value="BRICHOS"/>
    <property type="match status" value="1"/>
</dbReference>
<dbReference type="SMART" id="SM01039">
    <property type="entry name" value="BRICHOS"/>
    <property type="match status" value="1"/>
</dbReference>
<dbReference type="PROSITE" id="PS50869">
    <property type="entry name" value="BRICHOS"/>
    <property type="match status" value="1"/>
</dbReference>
<sequence>MVKISFQPAVAGIKGDKADKASASAPAPASATEILLTPAREEQLPQHRSKRGSSVGGVCYLSMGMVVLLMGLVFASVYIYRYFFLAQLARDNFFRCGVLYEDSLSSQVRTQMELEEDVKIYLDENYERINVPVPQFGGGDPADIIHDFQRGLTAYHDISLDKCYVIELNTTIVLPPRNFWELLMNVKRGTYLPQTYIIQEEMVVTEHVSDKEALGSFIYHLCNGKDTYRLRRRATRRRINKRGAKNCNAIRHFENTFVVETLICGVV</sequence>
<gene>
    <name type="primary">ITM2C</name>
</gene>
<name>ITM2C_PONAB</name>